<sequence>MITPAAYVGAAIAEIAGCFAFWAWLRLGKSVWWLVPGMASLALFAYLLTLVDSEAAGRAYAAYGGIYIMASLGWLWSVEGIEPDRWDLAGALICLIGAVVILIGPHEI</sequence>
<comment type="subcellular location">
    <subcellularLocation>
        <location evidence="1">Cell inner membrane</location>
        <topology evidence="1">Multi-pass membrane protein</topology>
    </subcellularLocation>
</comment>
<comment type="similarity">
    <text evidence="1">Belongs to the UPF0060 family.</text>
</comment>
<protein>
    <recommendedName>
        <fullName evidence="1">UPF0060 membrane protein Nwi_1459</fullName>
    </recommendedName>
</protein>
<gene>
    <name type="ordered locus">Nwi_1459</name>
</gene>
<dbReference type="EMBL" id="CP000115">
    <property type="protein sequence ID" value="ABA04720.1"/>
    <property type="molecule type" value="Genomic_DNA"/>
</dbReference>
<dbReference type="RefSeq" id="WP_011314727.1">
    <property type="nucleotide sequence ID" value="NC_007406.1"/>
</dbReference>
<dbReference type="SMR" id="Q3SSM1"/>
<dbReference type="STRING" id="323098.Nwi_1459"/>
<dbReference type="KEGG" id="nwi:Nwi_1459"/>
<dbReference type="eggNOG" id="COG1742">
    <property type="taxonomic scope" value="Bacteria"/>
</dbReference>
<dbReference type="HOGENOM" id="CLU_117653_1_0_5"/>
<dbReference type="OrthoDB" id="123240at2"/>
<dbReference type="Proteomes" id="UP000002531">
    <property type="component" value="Chromosome"/>
</dbReference>
<dbReference type="GO" id="GO:0005886">
    <property type="term" value="C:plasma membrane"/>
    <property type="evidence" value="ECO:0007669"/>
    <property type="project" value="UniProtKB-SubCell"/>
</dbReference>
<dbReference type="HAMAP" id="MF_00010">
    <property type="entry name" value="UPF0060"/>
    <property type="match status" value="1"/>
</dbReference>
<dbReference type="InterPro" id="IPR003844">
    <property type="entry name" value="UPF0060"/>
</dbReference>
<dbReference type="NCBIfam" id="NF002586">
    <property type="entry name" value="PRK02237.1"/>
    <property type="match status" value="1"/>
</dbReference>
<dbReference type="PANTHER" id="PTHR36116">
    <property type="entry name" value="UPF0060 MEMBRANE PROTEIN YNFA"/>
    <property type="match status" value="1"/>
</dbReference>
<dbReference type="PANTHER" id="PTHR36116:SF1">
    <property type="entry name" value="UPF0060 MEMBRANE PROTEIN YNFA"/>
    <property type="match status" value="1"/>
</dbReference>
<dbReference type="Pfam" id="PF02694">
    <property type="entry name" value="UPF0060"/>
    <property type="match status" value="1"/>
</dbReference>
<dbReference type="SUPFAM" id="SSF103481">
    <property type="entry name" value="Multidrug resistance efflux transporter EmrE"/>
    <property type="match status" value="1"/>
</dbReference>
<accession>Q3SSM1</accession>
<evidence type="ECO:0000255" key="1">
    <source>
        <dbReference type="HAMAP-Rule" id="MF_00010"/>
    </source>
</evidence>
<proteinExistence type="inferred from homology"/>
<organism>
    <name type="scientific">Nitrobacter winogradskyi (strain ATCC 25391 / DSM 10237 / CIP 104748 / NCIMB 11846 / Nb-255)</name>
    <dbReference type="NCBI Taxonomy" id="323098"/>
    <lineage>
        <taxon>Bacteria</taxon>
        <taxon>Pseudomonadati</taxon>
        <taxon>Pseudomonadota</taxon>
        <taxon>Alphaproteobacteria</taxon>
        <taxon>Hyphomicrobiales</taxon>
        <taxon>Nitrobacteraceae</taxon>
        <taxon>Nitrobacter</taxon>
    </lineage>
</organism>
<keyword id="KW-0997">Cell inner membrane</keyword>
<keyword id="KW-1003">Cell membrane</keyword>
<keyword id="KW-0472">Membrane</keyword>
<keyword id="KW-1185">Reference proteome</keyword>
<keyword id="KW-0812">Transmembrane</keyword>
<keyword id="KW-1133">Transmembrane helix</keyword>
<reference key="1">
    <citation type="journal article" date="2006" name="Appl. Environ. Microbiol.">
        <title>Genome sequence of the chemolithoautotrophic nitrite-oxidizing bacterium Nitrobacter winogradskyi Nb-255.</title>
        <authorList>
            <person name="Starkenburg S.R."/>
            <person name="Chain P.S.G."/>
            <person name="Sayavedra-Soto L.A."/>
            <person name="Hauser L."/>
            <person name="Land M.L."/>
            <person name="Larimer F.W."/>
            <person name="Malfatti S.A."/>
            <person name="Klotz M.G."/>
            <person name="Bottomley P.J."/>
            <person name="Arp D.J."/>
            <person name="Hickey W.J."/>
        </authorList>
    </citation>
    <scope>NUCLEOTIDE SEQUENCE [LARGE SCALE GENOMIC DNA]</scope>
    <source>
        <strain>ATCC 25391 / DSM 10237 / CIP 104748 / NCIMB 11846 / Nb-255</strain>
    </source>
</reference>
<name>Y1459_NITWN</name>
<feature type="chain" id="PRO_0000282240" description="UPF0060 membrane protein Nwi_1459">
    <location>
        <begin position="1"/>
        <end position="108"/>
    </location>
</feature>
<feature type="transmembrane region" description="Helical" evidence="1">
    <location>
        <begin position="5"/>
        <end position="25"/>
    </location>
</feature>
<feature type="transmembrane region" description="Helical" evidence="1">
    <location>
        <begin position="31"/>
        <end position="51"/>
    </location>
</feature>
<feature type="transmembrane region" description="Helical" evidence="1">
    <location>
        <begin position="61"/>
        <end position="81"/>
    </location>
</feature>
<feature type="transmembrane region" description="Helical" evidence="1">
    <location>
        <begin position="88"/>
        <end position="108"/>
    </location>
</feature>